<comment type="function">
    <text evidence="1">Catalyzes the NADPH-dependent rearrangement and reduction of 1-deoxy-D-xylulose-5-phosphate (DXP) to 2-C-methyl-D-erythritol 4-phosphate (MEP).</text>
</comment>
<comment type="catalytic activity">
    <reaction evidence="1">
        <text>2-C-methyl-D-erythritol 4-phosphate + NADP(+) = 1-deoxy-D-xylulose 5-phosphate + NADPH + H(+)</text>
        <dbReference type="Rhea" id="RHEA:13717"/>
        <dbReference type="ChEBI" id="CHEBI:15378"/>
        <dbReference type="ChEBI" id="CHEBI:57783"/>
        <dbReference type="ChEBI" id="CHEBI:57792"/>
        <dbReference type="ChEBI" id="CHEBI:58262"/>
        <dbReference type="ChEBI" id="CHEBI:58349"/>
        <dbReference type="EC" id="1.1.1.267"/>
    </reaction>
    <physiologicalReaction direction="right-to-left" evidence="1">
        <dbReference type="Rhea" id="RHEA:13719"/>
    </physiologicalReaction>
</comment>
<comment type="cofactor">
    <cofactor evidence="1">
        <name>Mg(2+)</name>
        <dbReference type="ChEBI" id="CHEBI:18420"/>
    </cofactor>
    <cofactor evidence="1">
        <name>Mn(2+)</name>
        <dbReference type="ChEBI" id="CHEBI:29035"/>
    </cofactor>
</comment>
<comment type="pathway">
    <text evidence="1">Isoprenoid biosynthesis; isopentenyl diphosphate biosynthesis via DXP pathway; isopentenyl diphosphate from 1-deoxy-D-xylulose 5-phosphate: step 1/6.</text>
</comment>
<comment type="similarity">
    <text evidence="1">Belongs to the DXR family.</text>
</comment>
<keyword id="KW-0414">Isoprene biosynthesis</keyword>
<keyword id="KW-0464">Manganese</keyword>
<keyword id="KW-0479">Metal-binding</keyword>
<keyword id="KW-0521">NADP</keyword>
<keyword id="KW-0560">Oxidoreductase</keyword>
<keyword id="KW-1185">Reference proteome</keyword>
<feature type="chain" id="PRO_0000163722" description="1-deoxy-D-xylulose 5-phosphate reductoisomerase">
    <location>
        <begin position="1"/>
        <end position="382"/>
    </location>
</feature>
<feature type="binding site" evidence="1">
    <location>
        <position position="10"/>
    </location>
    <ligand>
        <name>NADPH</name>
        <dbReference type="ChEBI" id="CHEBI:57783"/>
    </ligand>
</feature>
<feature type="binding site" evidence="1">
    <location>
        <position position="11"/>
    </location>
    <ligand>
        <name>NADPH</name>
        <dbReference type="ChEBI" id="CHEBI:57783"/>
    </ligand>
</feature>
<feature type="binding site" evidence="1">
    <location>
        <position position="12"/>
    </location>
    <ligand>
        <name>NADPH</name>
        <dbReference type="ChEBI" id="CHEBI:57783"/>
    </ligand>
</feature>
<feature type="binding site" evidence="1">
    <location>
        <position position="13"/>
    </location>
    <ligand>
        <name>NADPH</name>
        <dbReference type="ChEBI" id="CHEBI:57783"/>
    </ligand>
</feature>
<feature type="binding site" evidence="1">
    <location>
        <position position="38"/>
    </location>
    <ligand>
        <name>NADPH</name>
        <dbReference type="ChEBI" id="CHEBI:57783"/>
    </ligand>
</feature>
<feature type="binding site" evidence="1">
    <location>
        <position position="120"/>
    </location>
    <ligand>
        <name>NADPH</name>
        <dbReference type="ChEBI" id="CHEBI:57783"/>
    </ligand>
</feature>
<feature type="binding site" evidence="1">
    <location>
        <position position="121"/>
    </location>
    <ligand>
        <name>1-deoxy-D-xylulose 5-phosphate</name>
        <dbReference type="ChEBI" id="CHEBI:57792"/>
    </ligand>
</feature>
<feature type="binding site" evidence="1">
    <location>
        <position position="122"/>
    </location>
    <ligand>
        <name>NADPH</name>
        <dbReference type="ChEBI" id="CHEBI:57783"/>
    </ligand>
</feature>
<feature type="binding site" evidence="1">
    <location>
        <position position="146"/>
    </location>
    <ligand>
        <name>Mn(2+)</name>
        <dbReference type="ChEBI" id="CHEBI:29035"/>
    </ligand>
</feature>
<feature type="binding site" evidence="1">
    <location>
        <position position="147"/>
    </location>
    <ligand>
        <name>1-deoxy-D-xylulose 5-phosphate</name>
        <dbReference type="ChEBI" id="CHEBI:57792"/>
    </ligand>
</feature>
<feature type="binding site" evidence="1">
    <location>
        <position position="148"/>
    </location>
    <ligand>
        <name>1-deoxy-D-xylulose 5-phosphate</name>
        <dbReference type="ChEBI" id="CHEBI:57792"/>
    </ligand>
</feature>
<feature type="binding site" evidence="1">
    <location>
        <position position="148"/>
    </location>
    <ligand>
        <name>Mn(2+)</name>
        <dbReference type="ChEBI" id="CHEBI:29035"/>
    </ligand>
</feature>
<feature type="binding site" evidence="1">
    <location>
        <position position="172"/>
    </location>
    <ligand>
        <name>1-deoxy-D-xylulose 5-phosphate</name>
        <dbReference type="ChEBI" id="CHEBI:57792"/>
    </ligand>
</feature>
<feature type="binding site" evidence="1">
    <location>
        <position position="195"/>
    </location>
    <ligand>
        <name>1-deoxy-D-xylulose 5-phosphate</name>
        <dbReference type="ChEBI" id="CHEBI:57792"/>
    </ligand>
</feature>
<feature type="binding site" evidence="1">
    <location>
        <position position="201"/>
    </location>
    <ligand>
        <name>NADPH</name>
        <dbReference type="ChEBI" id="CHEBI:57783"/>
    </ligand>
</feature>
<feature type="binding site" evidence="1">
    <location>
        <position position="208"/>
    </location>
    <ligand>
        <name>1-deoxy-D-xylulose 5-phosphate</name>
        <dbReference type="ChEBI" id="CHEBI:57792"/>
    </ligand>
</feature>
<feature type="binding site" evidence="1">
    <location>
        <position position="213"/>
    </location>
    <ligand>
        <name>1-deoxy-D-xylulose 5-phosphate</name>
        <dbReference type="ChEBI" id="CHEBI:57792"/>
    </ligand>
</feature>
<feature type="binding site" evidence="1">
    <location>
        <position position="214"/>
    </location>
    <ligand>
        <name>1-deoxy-D-xylulose 5-phosphate</name>
        <dbReference type="ChEBI" id="CHEBI:57792"/>
    </ligand>
</feature>
<feature type="binding site" evidence="1">
    <location>
        <position position="217"/>
    </location>
    <ligand>
        <name>1-deoxy-D-xylulose 5-phosphate</name>
        <dbReference type="ChEBI" id="CHEBI:57792"/>
    </ligand>
</feature>
<feature type="binding site" evidence="1">
    <location>
        <position position="217"/>
    </location>
    <ligand>
        <name>Mn(2+)</name>
        <dbReference type="ChEBI" id="CHEBI:29035"/>
    </ligand>
</feature>
<accession>Q8RA28</accession>
<gene>
    <name evidence="1" type="primary">dxr</name>
    <name type="ordered locus">TTE1402</name>
</gene>
<evidence type="ECO:0000255" key="1">
    <source>
        <dbReference type="HAMAP-Rule" id="MF_00183"/>
    </source>
</evidence>
<protein>
    <recommendedName>
        <fullName evidence="1">1-deoxy-D-xylulose 5-phosphate reductoisomerase</fullName>
        <shortName evidence="1">DXP reductoisomerase</shortName>
        <ecNumber evidence="1">1.1.1.267</ecNumber>
    </recommendedName>
    <alternativeName>
        <fullName evidence="1">1-deoxyxylulose-5-phosphate reductoisomerase</fullName>
    </alternativeName>
    <alternativeName>
        <fullName evidence="1">2-C-methyl-D-erythritol 4-phosphate synthase</fullName>
    </alternativeName>
</protein>
<reference key="1">
    <citation type="journal article" date="2002" name="Genome Res.">
        <title>A complete sequence of the T. tengcongensis genome.</title>
        <authorList>
            <person name="Bao Q."/>
            <person name="Tian Y."/>
            <person name="Li W."/>
            <person name="Xu Z."/>
            <person name="Xuan Z."/>
            <person name="Hu S."/>
            <person name="Dong W."/>
            <person name="Yang J."/>
            <person name="Chen Y."/>
            <person name="Xue Y."/>
            <person name="Xu Y."/>
            <person name="Lai X."/>
            <person name="Huang L."/>
            <person name="Dong X."/>
            <person name="Ma Y."/>
            <person name="Ling L."/>
            <person name="Tan H."/>
            <person name="Chen R."/>
            <person name="Wang J."/>
            <person name="Yu J."/>
            <person name="Yang H."/>
        </authorList>
    </citation>
    <scope>NUCLEOTIDE SEQUENCE [LARGE SCALE GENOMIC DNA]</scope>
    <source>
        <strain>DSM 15242 / JCM 11007 / NBRC 100824 / MB4</strain>
    </source>
</reference>
<organism>
    <name type="scientific">Caldanaerobacter subterraneus subsp. tengcongensis (strain DSM 15242 / JCM 11007 / NBRC 100824 / MB4)</name>
    <name type="common">Thermoanaerobacter tengcongensis</name>
    <dbReference type="NCBI Taxonomy" id="273068"/>
    <lineage>
        <taxon>Bacteria</taxon>
        <taxon>Bacillati</taxon>
        <taxon>Bacillota</taxon>
        <taxon>Clostridia</taxon>
        <taxon>Thermoanaerobacterales</taxon>
        <taxon>Thermoanaerobacteraceae</taxon>
        <taxon>Caldanaerobacter</taxon>
    </lineage>
</organism>
<sequence length="382" mass="42768">MKKLIILGSTGSIGRQTLDVVRSLKEEFEIVGLTGYNNVSLLSKQIKEFRPKVVAVKDEEKARKLRENLDEPIEVLTGKEGLKEIVKYEADMVVVAVEGIAGLIPTVEAIKLGKNIALANKEVLVTAGEIVMGLVKEKKIEFLPVDSEHSAILQCLKGNNKREVSNLILTASGGPFRGKKKKDLVNVTVEEALKHPNWKMGKKITIDSATLMNKGFEVIEARWLFDMPLDKIKVVIHPQSIIHSMVEYVDGSVIAQLSVPDMRIAIQYALNYPDRKYVEGVKFLDFYALGQLTFEEPDFETFKCLSLAYHAAECGGTMTAVLNAADEVAVSLFLQNKINFLEIAEIIEEALENHKNIQNPTLDDIISVDLETRERIMRKYLR</sequence>
<name>DXR_CALS4</name>
<dbReference type="EC" id="1.1.1.267" evidence="1"/>
<dbReference type="EMBL" id="AE008691">
    <property type="protein sequence ID" value="AAM24624.1"/>
    <property type="molecule type" value="Genomic_DNA"/>
</dbReference>
<dbReference type="RefSeq" id="WP_009611039.1">
    <property type="nucleotide sequence ID" value="NC_003869.1"/>
</dbReference>
<dbReference type="SMR" id="Q8RA28"/>
<dbReference type="STRING" id="273068.TTE1402"/>
<dbReference type="KEGG" id="tte:TTE1402"/>
<dbReference type="eggNOG" id="COG0743">
    <property type="taxonomic scope" value="Bacteria"/>
</dbReference>
<dbReference type="HOGENOM" id="CLU_035714_4_0_9"/>
<dbReference type="OrthoDB" id="9806546at2"/>
<dbReference type="UniPathway" id="UPA00056">
    <property type="reaction ID" value="UER00092"/>
</dbReference>
<dbReference type="Proteomes" id="UP000000555">
    <property type="component" value="Chromosome"/>
</dbReference>
<dbReference type="GO" id="GO:0030604">
    <property type="term" value="F:1-deoxy-D-xylulose-5-phosphate reductoisomerase activity"/>
    <property type="evidence" value="ECO:0007669"/>
    <property type="project" value="UniProtKB-UniRule"/>
</dbReference>
<dbReference type="GO" id="GO:0030145">
    <property type="term" value="F:manganese ion binding"/>
    <property type="evidence" value="ECO:0007669"/>
    <property type="project" value="TreeGrafter"/>
</dbReference>
<dbReference type="GO" id="GO:0070402">
    <property type="term" value="F:NADPH binding"/>
    <property type="evidence" value="ECO:0007669"/>
    <property type="project" value="InterPro"/>
</dbReference>
<dbReference type="GO" id="GO:0051484">
    <property type="term" value="P:isopentenyl diphosphate biosynthetic process, methylerythritol 4-phosphate pathway involved in terpenoid biosynthetic process"/>
    <property type="evidence" value="ECO:0007669"/>
    <property type="project" value="TreeGrafter"/>
</dbReference>
<dbReference type="FunFam" id="3.40.50.720:FF:000045">
    <property type="entry name" value="1-deoxy-D-xylulose 5-phosphate reductoisomerase"/>
    <property type="match status" value="1"/>
</dbReference>
<dbReference type="Gene3D" id="1.10.1740.10">
    <property type="match status" value="1"/>
</dbReference>
<dbReference type="Gene3D" id="3.40.50.720">
    <property type="entry name" value="NAD(P)-binding Rossmann-like Domain"/>
    <property type="match status" value="1"/>
</dbReference>
<dbReference type="HAMAP" id="MF_00183">
    <property type="entry name" value="DXP_reductoisom"/>
    <property type="match status" value="1"/>
</dbReference>
<dbReference type="InterPro" id="IPR003821">
    <property type="entry name" value="DXP_reductoisomerase"/>
</dbReference>
<dbReference type="InterPro" id="IPR013644">
    <property type="entry name" value="DXP_reductoisomerase_C"/>
</dbReference>
<dbReference type="InterPro" id="IPR013512">
    <property type="entry name" value="DXP_reductoisomerase_N"/>
</dbReference>
<dbReference type="InterPro" id="IPR026877">
    <property type="entry name" value="DXPR_C"/>
</dbReference>
<dbReference type="InterPro" id="IPR036169">
    <property type="entry name" value="DXPR_C_sf"/>
</dbReference>
<dbReference type="InterPro" id="IPR036291">
    <property type="entry name" value="NAD(P)-bd_dom_sf"/>
</dbReference>
<dbReference type="NCBIfam" id="TIGR00243">
    <property type="entry name" value="Dxr"/>
    <property type="match status" value="1"/>
</dbReference>
<dbReference type="NCBIfam" id="NF009114">
    <property type="entry name" value="PRK12464.1"/>
    <property type="match status" value="1"/>
</dbReference>
<dbReference type="PANTHER" id="PTHR30525">
    <property type="entry name" value="1-DEOXY-D-XYLULOSE 5-PHOSPHATE REDUCTOISOMERASE"/>
    <property type="match status" value="1"/>
</dbReference>
<dbReference type="PANTHER" id="PTHR30525:SF0">
    <property type="entry name" value="1-DEOXY-D-XYLULOSE 5-PHOSPHATE REDUCTOISOMERASE, CHLOROPLASTIC"/>
    <property type="match status" value="1"/>
</dbReference>
<dbReference type="Pfam" id="PF08436">
    <property type="entry name" value="DXP_redisom_C"/>
    <property type="match status" value="1"/>
</dbReference>
<dbReference type="Pfam" id="PF02670">
    <property type="entry name" value="DXP_reductoisom"/>
    <property type="match status" value="1"/>
</dbReference>
<dbReference type="Pfam" id="PF13288">
    <property type="entry name" value="DXPR_C"/>
    <property type="match status" value="1"/>
</dbReference>
<dbReference type="PIRSF" id="PIRSF006205">
    <property type="entry name" value="Dxp_reductismrs"/>
    <property type="match status" value="1"/>
</dbReference>
<dbReference type="SUPFAM" id="SSF69055">
    <property type="entry name" value="1-deoxy-D-xylulose-5-phosphate reductoisomerase, C-terminal domain"/>
    <property type="match status" value="1"/>
</dbReference>
<dbReference type="SUPFAM" id="SSF55347">
    <property type="entry name" value="Glyceraldehyde-3-phosphate dehydrogenase-like, C-terminal domain"/>
    <property type="match status" value="1"/>
</dbReference>
<dbReference type="SUPFAM" id="SSF51735">
    <property type="entry name" value="NAD(P)-binding Rossmann-fold domains"/>
    <property type="match status" value="1"/>
</dbReference>
<proteinExistence type="inferred from homology"/>